<evidence type="ECO:0000255" key="1">
    <source>
        <dbReference type="HAMAP-Rule" id="MF_00141"/>
    </source>
</evidence>
<gene>
    <name evidence="1" type="primary">efp</name>
    <name type="ordered locus">P9303_00301</name>
</gene>
<protein>
    <recommendedName>
        <fullName evidence="1">Elongation factor P</fullName>
        <shortName evidence="1">EF-P</shortName>
    </recommendedName>
</protein>
<keyword id="KW-0963">Cytoplasm</keyword>
<keyword id="KW-0251">Elongation factor</keyword>
<keyword id="KW-0648">Protein biosynthesis</keyword>
<accession>A2C5M7</accession>
<feature type="chain" id="PRO_1000010805" description="Elongation factor P">
    <location>
        <begin position="1"/>
        <end position="186"/>
    </location>
</feature>
<dbReference type="EMBL" id="CP000554">
    <property type="protein sequence ID" value="ABM76787.1"/>
    <property type="molecule type" value="Genomic_DNA"/>
</dbReference>
<dbReference type="RefSeq" id="WP_011824720.1">
    <property type="nucleotide sequence ID" value="NC_008820.1"/>
</dbReference>
<dbReference type="SMR" id="A2C5M7"/>
<dbReference type="STRING" id="59922.P9303_00301"/>
<dbReference type="KEGG" id="pmf:P9303_00301"/>
<dbReference type="HOGENOM" id="CLU_074944_0_1_3"/>
<dbReference type="BioCyc" id="PMAR59922:G1G80-31-MONOMER"/>
<dbReference type="UniPathway" id="UPA00345"/>
<dbReference type="Proteomes" id="UP000002274">
    <property type="component" value="Chromosome"/>
</dbReference>
<dbReference type="GO" id="GO:0005737">
    <property type="term" value="C:cytoplasm"/>
    <property type="evidence" value="ECO:0007669"/>
    <property type="project" value="UniProtKB-SubCell"/>
</dbReference>
<dbReference type="GO" id="GO:0003746">
    <property type="term" value="F:translation elongation factor activity"/>
    <property type="evidence" value="ECO:0007669"/>
    <property type="project" value="UniProtKB-UniRule"/>
</dbReference>
<dbReference type="GO" id="GO:0043043">
    <property type="term" value="P:peptide biosynthetic process"/>
    <property type="evidence" value="ECO:0007669"/>
    <property type="project" value="InterPro"/>
</dbReference>
<dbReference type="CDD" id="cd04470">
    <property type="entry name" value="S1_EF-P_repeat_1"/>
    <property type="match status" value="1"/>
</dbReference>
<dbReference type="CDD" id="cd05794">
    <property type="entry name" value="S1_EF-P_repeat_2"/>
    <property type="match status" value="1"/>
</dbReference>
<dbReference type="FunFam" id="2.30.30.30:FF:000003">
    <property type="entry name" value="Elongation factor P"/>
    <property type="match status" value="1"/>
</dbReference>
<dbReference type="FunFam" id="2.40.50.140:FF:000004">
    <property type="entry name" value="Elongation factor P"/>
    <property type="match status" value="1"/>
</dbReference>
<dbReference type="FunFam" id="2.40.50.140:FF:000009">
    <property type="entry name" value="Elongation factor P"/>
    <property type="match status" value="1"/>
</dbReference>
<dbReference type="Gene3D" id="2.30.30.30">
    <property type="match status" value="1"/>
</dbReference>
<dbReference type="Gene3D" id="2.40.50.140">
    <property type="entry name" value="Nucleic acid-binding proteins"/>
    <property type="match status" value="2"/>
</dbReference>
<dbReference type="HAMAP" id="MF_00141">
    <property type="entry name" value="EF_P"/>
    <property type="match status" value="1"/>
</dbReference>
<dbReference type="InterPro" id="IPR015365">
    <property type="entry name" value="Elong-fact-P_C"/>
</dbReference>
<dbReference type="InterPro" id="IPR012340">
    <property type="entry name" value="NA-bd_OB-fold"/>
</dbReference>
<dbReference type="InterPro" id="IPR014722">
    <property type="entry name" value="Rib_uL2_dom2"/>
</dbReference>
<dbReference type="InterPro" id="IPR020599">
    <property type="entry name" value="Transl_elong_fac_P/YeiP"/>
</dbReference>
<dbReference type="InterPro" id="IPR013185">
    <property type="entry name" value="Transl_elong_KOW-like"/>
</dbReference>
<dbReference type="InterPro" id="IPR001059">
    <property type="entry name" value="Transl_elong_P/YeiP_cen"/>
</dbReference>
<dbReference type="InterPro" id="IPR013852">
    <property type="entry name" value="Transl_elong_P/YeiP_CS"/>
</dbReference>
<dbReference type="InterPro" id="IPR011768">
    <property type="entry name" value="Transl_elongation_fac_P"/>
</dbReference>
<dbReference type="InterPro" id="IPR008991">
    <property type="entry name" value="Translation_prot_SH3-like_sf"/>
</dbReference>
<dbReference type="NCBIfam" id="TIGR00038">
    <property type="entry name" value="efp"/>
    <property type="match status" value="1"/>
</dbReference>
<dbReference type="NCBIfam" id="NF001810">
    <property type="entry name" value="PRK00529.1"/>
    <property type="match status" value="1"/>
</dbReference>
<dbReference type="PANTHER" id="PTHR30053">
    <property type="entry name" value="ELONGATION FACTOR P"/>
    <property type="match status" value="1"/>
</dbReference>
<dbReference type="PANTHER" id="PTHR30053:SF12">
    <property type="entry name" value="ELONGATION FACTOR P (EF-P) FAMILY PROTEIN"/>
    <property type="match status" value="1"/>
</dbReference>
<dbReference type="Pfam" id="PF01132">
    <property type="entry name" value="EFP"/>
    <property type="match status" value="1"/>
</dbReference>
<dbReference type="Pfam" id="PF08207">
    <property type="entry name" value="EFP_N"/>
    <property type="match status" value="1"/>
</dbReference>
<dbReference type="Pfam" id="PF09285">
    <property type="entry name" value="Elong-fact-P_C"/>
    <property type="match status" value="1"/>
</dbReference>
<dbReference type="PIRSF" id="PIRSF005901">
    <property type="entry name" value="EF-P"/>
    <property type="match status" value="1"/>
</dbReference>
<dbReference type="SMART" id="SM01185">
    <property type="entry name" value="EFP"/>
    <property type="match status" value="1"/>
</dbReference>
<dbReference type="SMART" id="SM00841">
    <property type="entry name" value="Elong-fact-P_C"/>
    <property type="match status" value="1"/>
</dbReference>
<dbReference type="SUPFAM" id="SSF50249">
    <property type="entry name" value="Nucleic acid-binding proteins"/>
    <property type="match status" value="2"/>
</dbReference>
<dbReference type="SUPFAM" id="SSF50104">
    <property type="entry name" value="Translation proteins SH3-like domain"/>
    <property type="match status" value="1"/>
</dbReference>
<dbReference type="PROSITE" id="PS01275">
    <property type="entry name" value="EFP"/>
    <property type="match status" value="1"/>
</dbReference>
<reference key="1">
    <citation type="journal article" date="2007" name="PLoS Genet.">
        <title>Patterns and implications of gene gain and loss in the evolution of Prochlorococcus.</title>
        <authorList>
            <person name="Kettler G.C."/>
            <person name="Martiny A.C."/>
            <person name="Huang K."/>
            <person name="Zucker J."/>
            <person name="Coleman M.L."/>
            <person name="Rodrigue S."/>
            <person name="Chen F."/>
            <person name="Lapidus A."/>
            <person name="Ferriera S."/>
            <person name="Johnson J."/>
            <person name="Steglich C."/>
            <person name="Church G.M."/>
            <person name="Richardson P."/>
            <person name="Chisholm S.W."/>
        </authorList>
    </citation>
    <scope>NUCLEOTIDE SEQUENCE [LARGE SCALE GENOMIC DNA]</scope>
    <source>
        <strain>MIT 9303</strain>
    </source>
</reference>
<name>EFP_PROM3</name>
<organism>
    <name type="scientific">Prochlorococcus marinus (strain MIT 9303)</name>
    <dbReference type="NCBI Taxonomy" id="59922"/>
    <lineage>
        <taxon>Bacteria</taxon>
        <taxon>Bacillati</taxon>
        <taxon>Cyanobacteriota</taxon>
        <taxon>Cyanophyceae</taxon>
        <taxon>Synechococcales</taxon>
        <taxon>Prochlorococcaceae</taxon>
        <taxon>Prochlorococcus</taxon>
    </lineage>
</organism>
<sequence>MISSNDFRTGTSIELDGSVWRVVEFLHVKPGKGSAFVRTKLKAVQSGSVVEKTFRAGEMLPQALLEKSTLQHTYMESGDYVFMDMSSYEETRLTAQQIGDSRKYLKEGMEVNVVSWNGNPLEVELPNSVVLEITETDPGVKGDTATGGTKPAILETGAQVMVPLFLSVGEKIKVDTRNDSYLGREN</sequence>
<comment type="function">
    <text evidence="1">Involved in peptide bond synthesis. Stimulates efficient translation and peptide-bond synthesis on native or reconstituted 70S ribosomes in vitro. Probably functions indirectly by altering the affinity of the ribosome for aminoacyl-tRNA, thus increasing their reactivity as acceptors for peptidyl transferase.</text>
</comment>
<comment type="pathway">
    <text evidence="1">Protein biosynthesis; polypeptide chain elongation.</text>
</comment>
<comment type="subcellular location">
    <subcellularLocation>
        <location evidence="1">Cytoplasm</location>
    </subcellularLocation>
</comment>
<comment type="similarity">
    <text evidence="1">Belongs to the elongation factor P family.</text>
</comment>
<proteinExistence type="inferred from homology"/>